<organism>
    <name type="scientific">Homo sapiens</name>
    <name type="common">Human</name>
    <dbReference type="NCBI Taxonomy" id="9606"/>
    <lineage>
        <taxon>Eukaryota</taxon>
        <taxon>Metazoa</taxon>
        <taxon>Chordata</taxon>
        <taxon>Craniata</taxon>
        <taxon>Vertebrata</taxon>
        <taxon>Euteleostomi</taxon>
        <taxon>Mammalia</taxon>
        <taxon>Eutheria</taxon>
        <taxon>Euarchontoglires</taxon>
        <taxon>Primates</taxon>
        <taxon>Haplorrhini</taxon>
        <taxon>Catarrhini</taxon>
        <taxon>Hominidae</taxon>
        <taxon>Homo</taxon>
    </lineage>
</organism>
<name>LTOR3_HUMAN</name>
<protein>
    <recommendedName>
        <fullName evidence="21">Ragulator complex protein LAMTOR3</fullName>
    </recommendedName>
    <alternativeName>
        <fullName>Late endosomal/lysosomal adaptor and MAPK and MTOR activator 3</fullName>
    </alternativeName>
    <alternativeName>
        <fullName>MEK-binding partner 1</fullName>
        <shortName>Mp1</shortName>
    </alternativeName>
    <alternativeName>
        <fullName>Mitogen-activated protein kinase kinase 1-interacting protein 1</fullName>
    </alternativeName>
    <alternativeName>
        <fullName>Mitogen-activated protein kinase scaffold protein 1</fullName>
    </alternativeName>
</protein>
<feature type="chain" id="PRO_0000221005" description="Ragulator complex protein LAMTOR3">
    <location>
        <begin position="1"/>
        <end position="124"/>
    </location>
</feature>
<feature type="region of interest" description="Required for interaction with LAMTOR2" evidence="1">
    <location>
        <begin position="57"/>
        <end position="70"/>
    </location>
</feature>
<feature type="splice variant" id="VSP_046372" description="In isoform 2." evidence="20">
    <location>
        <begin position="35"/>
        <end position="41"/>
    </location>
</feature>
<feature type="mutagenesis site" description="In M5 mutant; impaired association with Rag GTPases." evidence="9">
    <original>QGSK</original>
    <variation>AGSD</variation>
    <location>
        <begin position="59"/>
        <end position="62"/>
    </location>
</feature>
<feature type="sequence conflict" description="In Ref. 2; AAG35540." evidence="21" ref="2">
    <original>F</original>
    <variation>L</variation>
    <location>
        <position position="49"/>
    </location>
</feature>
<feature type="helix" evidence="43">
    <location>
        <begin position="4"/>
        <end position="12"/>
    </location>
</feature>
<feature type="helix" evidence="43">
    <location>
        <begin position="13"/>
        <end position="15"/>
    </location>
</feature>
<feature type="strand" evidence="43">
    <location>
        <begin position="19"/>
        <end position="25"/>
    </location>
</feature>
<feature type="turn" evidence="44">
    <location>
        <begin position="27"/>
        <end position="29"/>
    </location>
</feature>
<feature type="strand" evidence="43">
    <location>
        <begin position="31"/>
        <end position="36"/>
    </location>
</feature>
<feature type="strand" evidence="45">
    <location>
        <begin position="38"/>
        <end position="40"/>
    </location>
</feature>
<feature type="helix" evidence="43">
    <location>
        <begin position="42"/>
        <end position="45"/>
    </location>
</feature>
<feature type="helix" evidence="43">
    <location>
        <begin position="47"/>
        <end position="50"/>
    </location>
</feature>
<feature type="helix" evidence="43">
    <location>
        <begin position="52"/>
        <end position="60"/>
    </location>
</feature>
<feature type="strand" evidence="43">
    <location>
        <begin position="63"/>
        <end position="65"/>
    </location>
</feature>
<feature type="strand" evidence="43">
    <location>
        <begin position="67"/>
        <end position="74"/>
    </location>
</feature>
<feature type="strand" evidence="43">
    <location>
        <begin position="76"/>
        <end position="85"/>
    </location>
</feature>
<feature type="strand" evidence="43">
    <location>
        <begin position="88"/>
        <end position="95"/>
    </location>
</feature>
<feature type="helix" evidence="43">
    <location>
        <begin position="100"/>
        <end position="119"/>
    </location>
</feature>
<accession>Q9UHA4</accession>
<accession>B2R4A1</accession>
<accession>J3KMX4</accession>
<accession>Q9H364</accession>
<keyword id="KW-0002">3D-structure</keyword>
<keyword id="KW-0025">Alternative splicing</keyword>
<keyword id="KW-0967">Endosome</keyword>
<keyword id="KW-0472">Membrane</keyword>
<keyword id="KW-1267">Proteomics identification</keyword>
<keyword id="KW-1185">Reference proteome</keyword>
<comment type="function">
    <text evidence="2 3 4 7 8 9 10 12">As part of the Ragulator complex it is involved in amino acid sensing and activation of mTORC1, a signaling complex promoting cell growth in response to growth factors, energy levels, and amino acids (PubMed:20381137, PubMed:22980980, PubMed:28935770, PubMed:29107538, PubMed:29123114, PubMed:29158492, PubMed:30181260). Activated by amino acids through a mechanism involving the lysosomal V-ATPase, the Ragulator plays a dual role for the small GTPases Rag (RagA/RRAGA, RagB/RRAGB, RagC/RRAGC and/or RagD/RRAGD): it (1) acts as a guanine nucleotide exchange factor (GEF), activating the small GTPases Rag and (2) mediates recruitment of Rag GTPases to the lysosome membrane (PubMed:22980980, PubMed:28935770, PubMed:29107538, PubMed:29123114, PubMed:29158492, PubMed:30181260). Activated Ragulator and Rag GTPases function as a scaffold recruiting mTORC1 to lysosomes where it is in turn activated (PubMed:22980980, PubMed:28935770, PubMed:29107538, PubMed:29123114, PubMed:29158492, PubMed:30181260). Adapter protein that enhances the efficiency of the MAP kinase cascade facilitating the activation of MAPK2 (By similarity).</text>
</comment>
<comment type="subunit">
    <text evidence="2 3 4 5 6 7 8 9 10 11 13 14 15 16 17 18 19">Part of the Ragulator complex composed of LAMTOR1, LAMTOR2, LAMTOR3, LAMTOR4 and LAMTOR5 (PubMed:20381137, PubMed:22980980, PubMed:28935770, PubMed:29107538, PubMed:29123114, PubMed:29158492, PubMed:29285400, PubMed:31601708, PubMed:32868926, PubMed:35338845, PubMed:36103527, PubMed:36697823). LAMTOR4 and LAMTOR5 form a heterodimer that interacts, through LAMTOR1, with a LAMTOR2, LAMTOR3 heterodimer (PubMed:20381137, PubMed:22980980). Interacts with LAMTOR1 and LAMTOR2; the interaction is direct (PubMed:20381137, PubMed:22980980). The Ragulator complex interacts with both the mTORC1 complex and heterodimers constituted of the Rag GTPases RagA/RRAGA, RagB/RRAGB, RagC/RRAGC and RagD/RRAGD; regulated by amino acid availability (PubMed:20381137, PubMed:32868926). The Ragulator complex interacts with SLC38A9; the probable amino acid sensor (PubMed:25561175, PubMed:25567906, PubMed:32868926). Component of the lysosomal folliculin complex (LFC), composed of FLCN, FNIP1 (or FNIP2), RagA/RRAGA or RagB/RRAGB GDP-bound, RagC/RRAGC or RagD/RRAGD GTP-bound, and Ragulator (PubMed:31672913, PubMed:31704029, PubMed:32868926). Interacts with MAP2K1/MEK1 and MAPK2 (By similarity). Interacts with MORG1 (By similarity).</text>
</comment>
<comment type="interaction">
    <interactant intactId="EBI-1038192">
        <id>Q9UHA4</id>
    </interactant>
    <interactant intactId="EBI-11574440">
        <id>Q9BWW8</id>
        <label>APOL6</label>
    </interactant>
    <organismsDiffer>false</organismsDiffer>
    <experiments>3</experiments>
</comment>
<comment type="interaction">
    <interactant intactId="EBI-1038192">
        <id>Q9UHA4</id>
    </interactant>
    <interactant intactId="EBI-715385">
        <id>Q6IAA8</id>
        <label>LAMTOR1</label>
    </interactant>
    <organismsDiffer>false</organismsDiffer>
    <experiments>17</experiments>
</comment>
<comment type="interaction">
    <interactant intactId="EBI-1038192">
        <id>Q9UHA4</id>
    </interactant>
    <interactant intactId="EBI-2643704">
        <id>Q9Y2Q5</id>
        <label>LAMTOR2</label>
    </interactant>
    <organismsDiffer>false</organismsDiffer>
    <experiments>40</experiments>
</comment>
<comment type="interaction">
    <interactant intactId="EBI-1038192">
        <id>Q9UHA4</id>
    </interactant>
    <interactant intactId="EBI-740897">
        <id>Q9GZT8</id>
        <label>NIF3L1</label>
    </interactant>
    <organismsDiffer>false</organismsDiffer>
    <experiments>3</experiments>
</comment>
<comment type="interaction">
    <interactant intactId="EBI-1038192">
        <id>Q9UHA4</id>
    </interactant>
    <interactant intactId="EBI-9978316">
        <id>Q8NBW4</id>
        <label>SLC38A9</label>
    </interactant>
    <organismsDiffer>false</organismsDiffer>
    <experiments>7</experiments>
</comment>
<comment type="interaction">
    <interactant intactId="EBI-1038192">
        <id>Q9UHA4</id>
    </interactant>
    <interactant intactId="EBI-1048957">
        <id>P19532</id>
        <label>TFE3</label>
    </interactant>
    <organismsDiffer>false</organismsDiffer>
    <experiments>3</experiments>
</comment>
<comment type="interaction">
    <interactant intactId="EBI-1038192">
        <id>Q9UHA4</id>
    </interactant>
    <interactant intactId="EBI-12029034">
        <id>Q96PF1</id>
        <label>TGM7</label>
    </interactant>
    <organismsDiffer>false</organismsDiffer>
    <experiments>3</experiments>
</comment>
<comment type="interaction">
    <interactant intactId="EBI-1038192">
        <id>Q9UHA4</id>
    </interactant>
    <interactant intactId="EBI-7252920">
        <id>Q8NAM6</id>
        <label>ZSCAN4</label>
    </interactant>
    <organismsDiffer>false</organismsDiffer>
    <experiments>3</experiments>
</comment>
<comment type="subcellular location">
    <subcellularLocation>
        <location evidence="2">Late endosome membrane</location>
        <topology evidence="2">Peripheral membrane protein</topology>
        <orientation evidence="2">Cytoplasmic side</orientation>
    </subcellularLocation>
    <text evidence="2">Recruited to lysosome and endosome membranes by LAMTOR1.</text>
</comment>
<comment type="alternative products">
    <event type="alternative splicing"/>
    <isoform>
        <id>Q9UHA4-1</id>
        <name>1</name>
        <sequence type="displayed"/>
    </isoform>
    <isoform>
        <id>Q9UHA4-2</id>
        <name>2</name>
        <sequence type="described" ref="VSP_046372"/>
    </isoform>
</comment>
<comment type="similarity">
    <text evidence="21">Belongs to the LAMTOR3 family.</text>
</comment>
<sequence>MADDLKRFLYKKLPSVEGLHAIVVSDRDGVPVIKVANDNAPEHALRPGFLSTFALATDQGSKLGLSKNKSIICYYNTYQVVQFNRLPLVVSFIASSSANTGLIVSLEKELAPLFEELRQVVEVS</sequence>
<reference key="1">
    <citation type="submission" date="1999-11" db="EMBL/GenBank/DDBJ databases">
        <title>Novel genes expressed in human dendritic cells.</title>
        <authorList>
            <person name="Li Y."/>
            <person name="Huang C."/>
            <person name="Ren S."/>
            <person name="Tu Y."/>
            <person name="Gu W."/>
            <person name="Wang Y."/>
            <person name="Han Z."/>
            <person name="Chen Z."/>
        </authorList>
    </citation>
    <scope>NUCLEOTIDE SEQUENCE [LARGE SCALE MRNA] (ISOFORM 1)</scope>
    <source>
        <tissue>Dendritic cell</tissue>
    </source>
</reference>
<reference key="2">
    <citation type="submission" date="1999-02" db="EMBL/GenBank/DDBJ databases">
        <title>Functional prediction of the coding sequences of 75 new genes deduced by analysis of cDNA clones from human fetal liver.</title>
        <authorList>
            <person name="Zhang C."/>
            <person name="Yu Y."/>
            <person name="Zhang S."/>
            <person name="Wei H."/>
            <person name="Bi J."/>
            <person name="Zhou G."/>
            <person name="Dong C."/>
            <person name="Zai Y."/>
            <person name="Xu W."/>
            <person name="Gao F."/>
            <person name="Liu M."/>
            <person name="He F."/>
        </authorList>
    </citation>
    <scope>NUCLEOTIDE SEQUENCE [LARGE SCALE MRNA] (ISOFORM 1)</scope>
    <source>
        <tissue>Fetal liver</tissue>
    </source>
</reference>
<reference key="3">
    <citation type="submission" date="2003-04" db="EMBL/GenBank/DDBJ databases">
        <title>Full-length cDNA libraries and normalization.</title>
        <authorList>
            <person name="Li W.B."/>
            <person name="Gruber C."/>
            <person name="Jessee J."/>
            <person name="Polayes D."/>
        </authorList>
    </citation>
    <scope>NUCLEOTIDE SEQUENCE [LARGE SCALE MRNA] (ISOFORM 2)</scope>
    <source>
        <tissue>Placenta</tissue>
    </source>
</reference>
<reference key="4">
    <citation type="journal article" date="2004" name="Nat. Genet.">
        <title>Complete sequencing and characterization of 21,243 full-length human cDNAs.</title>
        <authorList>
            <person name="Ota T."/>
            <person name="Suzuki Y."/>
            <person name="Nishikawa T."/>
            <person name="Otsuki T."/>
            <person name="Sugiyama T."/>
            <person name="Irie R."/>
            <person name="Wakamatsu A."/>
            <person name="Hayashi K."/>
            <person name="Sato H."/>
            <person name="Nagai K."/>
            <person name="Kimura K."/>
            <person name="Makita H."/>
            <person name="Sekine M."/>
            <person name="Obayashi M."/>
            <person name="Nishi T."/>
            <person name="Shibahara T."/>
            <person name="Tanaka T."/>
            <person name="Ishii S."/>
            <person name="Yamamoto J."/>
            <person name="Saito K."/>
            <person name="Kawai Y."/>
            <person name="Isono Y."/>
            <person name="Nakamura Y."/>
            <person name="Nagahari K."/>
            <person name="Murakami K."/>
            <person name="Yasuda T."/>
            <person name="Iwayanagi T."/>
            <person name="Wagatsuma M."/>
            <person name="Shiratori A."/>
            <person name="Sudo H."/>
            <person name="Hosoiri T."/>
            <person name="Kaku Y."/>
            <person name="Kodaira H."/>
            <person name="Kondo H."/>
            <person name="Sugawara M."/>
            <person name="Takahashi M."/>
            <person name="Kanda K."/>
            <person name="Yokoi T."/>
            <person name="Furuya T."/>
            <person name="Kikkawa E."/>
            <person name="Omura Y."/>
            <person name="Abe K."/>
            <person name="Kamihara K."/>
            <person name="Katsuta N."/>
            <person name="Sato K."/>
            <person name="Tanikawa M."/>
            <person name="Yamazaki M."/>
            <person name="Ninomiya K."/>
            <person name="Ishibashi T."/>
            <person name="Yamashita H."/>
            <person name="Murakawa K."/>
            <person name="Fujimori K."/>
            <person name="Tanai H."/>
            <person name="Kimata M."/>
            <person name="Watanabe M."/>
            <person name="Hiraoka S."/>
            <person name="Chiba Y."/>
            <person name="Ishida S."/>
            <person name="Ono Y."/>
            <person name="Takiguchi S."/>
            <person name="Watanabe S."/>
            <person name="Yosida M."/>
            <person name="Hotuta T."/>
            <person name="Kusano J."/>
            <person name="Kanehori K."/>
            <person name="Takahashi-Fujii A."/>
            <person name="Hara H."/>
            <person name="Tanase T.-O."/>
            <person name="Nomura Y."/>
            <person name="Togiya S."/>
            <person name="Komai F."/>
            <person name="Hara R."/>
            <person name="Takeuchi K."/>
            <person name="Arita M."/>
            <person name="Imose N."/>
            <person name="Musashino K."/>
            <person name="Yuuki H."/>
            <person name="Oshima A."/>
            <person name="Sasaki N."/>
            <person name="Aotsuka S."/>
            <person name="Yoshikawa Y."/>
            <person name="Matsunawa H."/>
            <person name="Ichihara T."/>
            <person name="Shiohata N."/>
            <person name="Sano S."/>
            <person name="Moriya S."/>
            <person name="Momiyama H."/>
            <person name="Satoh N."/>
            <person name="Takami S."/>
            <person name="Terashima Y."/>
            <person name="Suzuki O."/>
            <person name="Nakagawa S."/>
            <person name="Senoh A."/>
            <person name="Mizoguchi H."/>
            <person name="Goto Y."/>
            <person name="Shimizu F."/>
            <person name="Wakebe H."/>
            <person name="Hishigaki H."/>
            <person name="Watanabe T."/>
            <person name="Sugiyama A."/>
            <person name="Takemoto M."/>
            <person name="Kawakami B."/>
            <person name="Yamazaki M."/>
            <person name="Watanabe K."/>
            <person name="Kumagai A."/>
            <person name="Itakura S."/>
            <person name="Fukuzumi Y."/>
            <person name="Fujimori Y."/>
            <person name="Komiyama M."/>
            <person name="Tashiro H."/>
            <person name="Tanigami A."/>
            <person name="Fujiwara T."/>
            <person name="Ono T."/>
            <person name="Yamada K."/>
            <person name="Fujii Y."/>
            <person name="Ozaki K."/>
            <person name="Hirao M."/>
            <person name="Ohmori Y."/>
            <person name="Kawabata A."/>
            <person name="Hikiji T."/>
            <person name="Kobatake N."/>
            <person name="Inagaki H."/>
            <person name="Ikema Y."/>
            <person name="Okamoto S."/>
            <person name="Okitani R."/>
            <person name="Kawakami T."/>
            <person name="Noguchi S."/>
            <person name="Itoh T."/>
            <person name="Shigeta K."/>
            <person name="Senba T."/>
            <person name="Matsumura K."/>
            <person name="Nakajima Y."/>
            <person name="Mizuno T."/>
            <person name="Morinaga M."/>
            <person name="Sasaki M."/>
            <person name="Togashi T."/>
            <person name="Oyama M."/>
            <person name="Hata H."/>
            <person name="Watanabe M."/>
            <person name="Komatsu T."/>
            <person name="Mizushima-Sugano J."/>
            <person name="Satoh T."/>
            <person name="Shirai Y."/>
            <person name="Takahashi Y."/>
            <person name="Nakagawa K."/>
            <person name="Okumura K."/>
            <person name="Nagase T."/>
            <person name="Nomura N."/>
            <person name="Kikuchi H."/>
            <person name="Masuho Y."/>
            <person name="Yamashita R."/>
            <person name="Nakai K."/>
            <person name="Yada T."/>
            <person name="Nakamura Y."/>
            <person name="Ohara O."/>
            <person name="Isogai T."/>
            <person name="Sugano S."/>
        </authorList>
    </citation>
    <scope>NUCLEOTIDE SEQUENCE [LARGE SCALE MRNA] (ISOFORM 1)</scope>
    <source>
        <tissue>Brain</tissue>
    </source>
</reference>
<reference key="5">
    <citation type="journal article" date="2005" name="Nature">
        <title>Generation and annotation of the DNA sequences of human chromosomes 2 and 4.</title>
        <authorList>
            <person name="Hillier L.W."/>
            <person name="Graves T.A."/>
            <person name="Fulton R.S."/>
            <person name="Fulton L.A."/>
            <person name="Pepin K.H."/>
            <person name="Minx P."/>
            <person name="Wagner-McPherson C."/>
            <person name="Layman D."/>
            <person name="Wylie K."/>
            <person name="Sekhon M."/>
            <person name="Becker M.C."/>
            <person name="Fewell G.A."/>
            <person name="Delehaunty K.D."/>
            <person name="Miner T.L."/>
            <person name="Nash W.E."/>
            <person name="Kremitzki C."/>
            <person name="Oddy L."/>
            <person name="Du H."/>
            <person name="Sun H."/>
            <person name="Bradshaw-Cordum H."/>
            <person name="Ali J."/>
            <person name="Carter J."/>
            <person name="Cordes M."/>
            <person name="Harris A."/>
            <person name="Isak A."/>
            <person name="van Brunt A."/>
            <person name="Nguyen C."/>
            <person name="Du F."/>
            <person name="Courtney L."/>
            <person name="Kalicki J."/>
            <person name="Ozersky P."/>
            <person name="Abbott S."/>
            <person name="Armstrong J."/>
            <person name="Belter E.A."/>
            <person name="Caruso L."/>
            <person name="Cedroni M."/>
            <person name="Cotton M."/>
            <person name="Davidson T."/>
            <person name="Desai A."/>
            <person name="Elliott G."/>
            <person name="Erb T."/>
            <person name="Fronick C."/>
            <person name="Gaige T."/>
            <person name="Haakenson W."/>
            <person name="Haglund K."/>
            <person name="Holmes A."/>
            <person name="Harkins R."/>
            <person name="Kim K."/>
            <person name="Kruchowski S.S."/>
            <person name="Strong C.M."/>
            <person name="Grewal N."/>
            <person name="Goyea E."/>
            <person name="Hou S."/>
            <person name="Levy A."/>
            <person name="Martinka S."/>
            <person name="Mead K."/>
            <person name="McLellan M.D."/>
            <person name="Meyer R."/>
            <person name="Randall-Maher J."/>
            <person name="Tomlinson C."/>
            <person name="Dauphin-Kohlberg S."/>
            <person name="Kozlowicz-Reilly A."/>
            <person name="Shah N."/>
            <person name="Swearengen-Shahid S."/>
            <person name="Snider J."/>
            <person name="Strong J.T."/>
            <person name="Thompson J."/>
            <person name="Yoakum M."/>
            <person name="Leonard S."/>
            <person name="Pearman C."/>
            <person name="Trani L."/>
            <person name="Radionenko M."/>
            <person name="Waligorski J.E."/>
            <person name="Wang C."/>
            <person name="Rock S.M."/>
            <person name="Tin-Wollam A.-M."/>
            <person name="Maupin R."/>
            <person name="Latreille P."/>
            <person name="Wendl M.C."/>
            <person name="Yang S.-P."/>
            <person name="Pohl C."/>
            <person name="Wallis J.W."/>
            <person name="Spieth J."/>
            <person name="Bieri T.A."/>
            <person name="Berkowicz N."/>
            <person name="Nelson J.O."/>
            <person name="Osborne J."/>
            <person name="Ding L."/>
            <person name="Meyer R."/>
            <person name="Sabo A."/>
            <person name="Shotland Y."/>
            <person name="Sinha P."/>
            <person name="Wohldmann P.E."/>
            <person name="Cook L.L."/>
            <person name="Hickenbotham M.T."/>
            <person name="Eldred J."/>
            <person name="Williams D."/>
            <person name="Jones T.A."/>
            <person name="She X."/>
            <person name="Ciccarelli F.D."/>
            <person name="Izaurralde E."/>
            <person name="Taylor J."/>
            <person name="Schmutz J."/>
            <person name="Myers R.M."/>
            <person name="Cox D.R."/>
            <person name="Huang X."/>
            <person name="McPherson J.D."/>
            <person name="Mardis E.R."/>
            <person name="Clifton S.W."/>
            <person name="Warren W.C."/>
            <person name="Chinwalla A.T."/>
            <person name="Eddy S.R."/>
            <person name="Marra M.A."/>
            <person name="Ovcharenko I."/>
            <person name="Furey T.S."/>
            <person name="Miller W."/>
            <person name="Eichler E.E."/>
            <person name="Bork P."/>
            <person name="Suyama M."/>
            <person name="Torrents D."/>
            <person name="Waterston R.H."/>
            <person name="Wilson R.K."/>
        </authorList>
    </citation>
    <scope>NUCLEOTIDE SEQUENCE [LARGE SCALE GENOMIC DNA]</scope>
</reference>
<reference key="6">
    <citation type="submission" date="2005-07" db="EMBL/GenBank/DDBJ databases">
        <authorList>
            <person name="Mural R.J."/>
            <person name="Istrail S."/>
            <person name="Sutton G.G."/>
            <person name="Florea L."/>
            <person name="Halpern A.L."/>
            <person name="Mobarry C.M."/>
            <person name="Lippert R."/>
            <person name="Walenz B."/>
            <person name="Shatkay H."/>
            <person name="Dew I."/>
            <person name="Miller J.R."/>
            <person name="Flanigan M.J."/>
            <person name="Edwards N.J."/>
            <person name="Bolanos R."/>
            <person name="Fasulo D."/>
            <person name="Halldorsson B.V."/>
            <person name="Hannenhalli S."/>
            <person name="Turner R."/>
            <person name="Yooseph S."/>
            <person name="Lu F."/>
            <person name="Nusskern D.R."/>
            <person name="Shue B.C."/>
            <person name="Zheng X.H."/>
            <person name="Zhong F."/>
            <person name="Delcher A.L."/>
            <person name="Huson D.H."/>
            <person name="Kravitz S.A."/>
            <person name="Mouchard L."/>
            <person name="Reinert K."/>
            <person name="Remington K.A."/>
            <person name="Clark A.G."/>
            <person name="Waterman M.S."/>
            <person name="Eichler E.E."/>
            <person name="Adams M.D."/>
            <person name="Hunkapiller M.W."/>
            <person name="Myers E.W."/>
            <person name="Venter J.C."/>
        </authorList>
    </citation>
    <scope>NUCLEOTIDE SEQUENCE [LARGE SCALE GENOMIC DNA]</scope>
</reference>
<reference key="7">
    <citation type="journal article" date="2004" name="Genome Res.">
        <title>The status, quality, and expansion of the NIH full-length cDNA project: the Mammalian Gene Collection (MGC).</title>
        <authorList>
            <consortium name="The MGC Project Team"/>
        </authorList>
    </citation>
    <scope>NUCLEOTIDE SEQUENCE [LARGE SCALE MRNA] (ISOFORM 1)</scope>
    <source>
        <tissue>Lung</tissue>
    </source>
</reference>
<reference key="8">
    <citation type="journal article" date="2010" name="Cell">
        <title>Ragulator-Rag complex targets mTORC1 to the lysosomal surface and is necessary for its activation by amino acids.</title>
        <authorList>
            <person name="Sancak Y."/>
            <person name="Bar-Peled L."/>
            <person name="Zoncu R."/>
            <person name="Markhard A.L."/>
            <person name="Nada S."/>
            <person name="Sabatini D.M."/>
        </authorList>
    </citation>
    <scope>FUNCTION</scope>
    <scope>IDENTIFICATION IN RAGULATOR COMPLEX</scope>
</reference>
<reference key="9">
    <citation type="journal article" date="2011" name="BMC Syst. Biol.">
        <title>Initial characterization of the human central proteome.</title>
        <authorList>
            <person name="Burkard T.R."/>
            <person name="Planyavsky M."/>
            <person name="Kaupe I."/>
            <person name="Breitwieser F.P."/>
            <person name="Buerckstuemmer T."/>
            <person name="Bennett K.L."/>
            <person name="Superti-Furga G."/>
            <person name="Colinge J."/>
        </authorList>
    </citation>
    <scope>IDENTIFICATION BY MASS SPECTROMETRY [LARGE SCALE ANALYSIS]</scope>
</reference>
<reference key="10">
    <citation type="journal article" date="2012" name="Cell">
        <title>Ragulator is a GEF for the Rag GTPases that signal amino acid levels to mTORC1.</title>
        <authorList>
            <person name="Bar-Peled L."/>
            <person name="Schweitzer L.D."/>
            <person name="Zoncu R."/>
            <person name="Sabatini D.M."/>
        </authorList>
    </citation>
    <scope>FUNCTION IN MTORC1 SIGNALING</scope>
    <scope>IDENTIFICATION IN RAGULATOR COMPLEX</scope>
    <scope>INTERACTION WITH MTORC1 COMPLEX AND RAG GTPASES</scope>
</reference>
<reference key="11">
    <citation type="journal article" date="2015" name="Nature">
        <title>SLC38A9 is a component of the lysosomal amino acid sensing machinery that controls mTORC1.</title>
        <authorList>
            <person name="Rebsamen M."/>
            <person name="Pochini L."/>
            <person name="Stasyk T."/>
            <person name="de Araujo M.E."/>
            <person name="Galluccio M."/>
            <person name="Kandasamy R.K."/>
            <person name="Snijder B."/>
            <person name="Fauster A."/>
            <person name="Rudashevskaya E.L."/>
            <person name="Bruckner M."/>
            <person name="Scorzoni S."/>
            <person name="Filipek P.A."/>
            <person name="Huber K.V."/>
            <person name="Bigenzahn J.W."/>
            <person name="Heinz L.X."/>
            <person name="Kraft C."/>
            <person name="Bennett K.L."/>
            <person name="Indiveri C."/>
            <person name="Huber L.A."/>
            <person name="Superti-Furga G."/>
        </authorList>
    </citation>
    <scope>INTERACTION WITH SLC38A9</scope>
</reference>
<reference key="12">
    <citation type="journal article" date="2015" name="Proteomics">
        <title>N-terminome analysis of the human mitochondrial proteome.</title>
        <authorList>
            <person name="Vaca Jacome A.S."/>
            <person name="Rabilloud T."/>
            <person name="Schaeffer-Reiss C."/>
            <person name="Rompais M."/>
            <person name="Ayoub D."/>
            <person name="Lane L."/>
            <person name="Bairoch A."/>
            <person name="Van Dorsselaer A."/>
            <person name="Carapito C."/>
        </authorList>
    </citation>
    <scope>IDENTIFICATION BY MASS SPECTROMETRY [LARGE SCALE ANALYSIS]</scope>
</reference>
<reference key="13">
    <citation type="journal article" date="2015" name="Science">
        <title>Metabolism. Lysosomal amino acid transporter SLC38A9 signals arginine sufficiency to mTORC1.</title>
        <authorList>
            <person name="Wang S."/>
            <person name="Tsun Z.Y."/>
            <person name="Wolfson R.L."/>
            <person name="Shen K."/>
            <person name="Wyant G.A."/>
            <person name="Plovanich M.E."/>
            <person name="Yuan E.D."/>
            <person name="Jones T.D."/>
            <person name="Chantranupong L."/>
            <person name="Comb W."/>
            <person name="Wang T."/>
            <person name="Bar-Peled L."/>
            <person name="Zoncu R."/>
            <person name="Straub C."/>
            <person name="Kim C."/>
            <person name="Park J."/>
            <person name="Sabatini B.L."/>
            <person name="Sabatini D.M."/>
        </authorList>
    </citation>
    <scope>INTERACTION WITH SLC38A9</scope>
</reference>
<reference key="14">
    <citation type="journal article" date="2004" name="J. Biol. Chem.">
        <title>The structure of the MAPK scaffold, MP1, bound to its partner, p14. A complex with a critical role in endosomal MAP kinase signaling.</title>
        <authorList>
            <person name="Lunin V.V."/>
            <person name="Munger C."/>
            <person name="Wagner J."/>
            <person name="Ye Z."/>
            <person name="Cygler M."/>
            <person name="Sacher M."/>
        </authorList>
    </citation>
    <scope>X-RAY CRYSTALLOGRAPHY (2.0 ANGSTROMS) OF 2-124 IN COMPLEX WITH LAMTOR2</scope>
</reference>
<reference key="15">
    <citation type="journal article" date="2018" name="Proc. Natl. Acad. Sci. U.S.A.">
        <title>Ragulator and SLC38A9 activate the Rag GTPases through noncanonical GEF mechanisms.</title>
        <authorList>
            <person name="Shen K."/>
            <person name="Sabatini D.M."/>
        </authorList>
    </citation>
    <scope>FUNCTION</scope>
</reference>
<reference evidence="27" key="16">
    <citation type="journal article" date="2017" name="Cell Discov.">
        <title>Structural insight into the Ragulator complex which anchors mTORC1 to the lysosomal membrane.</title>
        <authorList>
            <person name="Mu Z."/>
            <person name="Wang L."/>
            <person name="Deng W."/>
            <person name="Wang J."/>
            <person name="Wu G."/>
        </authorList>
    </citation>
    <scope>X-RAY CRYSTALLOGRAPHY (2.03 ANGSTROMS) OF 77-160 IN COMPLEX WITH LAMTOR1; LAMTOR2; LAMTOR4 AND LAMTOR5</scope>
    <scope>IDENTIFICATION IN RAGULATOR COMPLEX</scope>
</reference>
<reference evidence="28" key="17">
    <citation type="journal article" date="2017" name="Mol. Cell">
        <title>Hybrid Structure of the RagA/C-Ragulator mTORC1 Activation Complex.</title>
        <authorList>
            <person name="Su M.Y."/>
            <person name="Morris K.L."/>
            <person name="Kim D.J."/>
            <person name="Fu Y."/>
            <person name="Lawrence R."/>
            <person name="Stjepanovic G."/>
            <person name="Zoncu R."/>
            <person name="Hurley J.H."/>
        </authorList>
    </citation>
    <scope>X-RAY CRYSTALLOGRAPHY (1.42 ANGSTROMS) IN COMPLEX WITH LAMTOR1; LAMTOR2; LAMTOR4 AND LAMTOR5</scope>
    <scope>FUNCTION</scope>
    <scope>IDENTIFICATION IN RAGULATOR COMPLEX</scope>
</reference>
<reference evidence="25 26" key="18">
    <citation type="journal article" date="2017" name="Nat. Commun.">
        <title>Structural basis for Ragulator functioning as a scaffold in membrane-anchoring of Rag GTPases and mTORC1.</title>
        <authorList>
            <person name="Zhang T."/>
            <person name="Wang R."/>
            <person name="Wang Z."/>
            <person name="Wang X."/>
            <person name="Wang F."/>
            <person name="Ding J."/>
        </authorList>
    </citation>
    <scope>X-RAY CRYSTALLOGRAPHY (2.65 ANGSTROMS) IN COMPLEX WITH LAMTOR1; LAMTOR2; LAMTOR4 AND LAMTOR5</scope>
    <scope>FUNCTION</scope>
    <scope>IDENTIFICATION IN RAGULATOR COMPLEX</scope>
    <scope>MUTAGENESIS OF 59-GLN--LYS-62</scope>
</reference>
<reference evidence="23 24" key="19">
    <citation type="journal article" date="2017" name="Nat. Commun.">
        <title>Structural basis for the assembly of the Ragulator-Rag GTPase complex.</title>
        <authorList>
            <person name="Yonehara R."/>
            <person name="Nada S."/>
            <person name="Nakai T."/>
            <person name="Nakai M."/>
            <person name="Kitamura A."/>
            <person name="Ogawa A."/>
            <person name="Nakatsumi H."/>
            <person name="Nakayama K.I."/>
            <person name="Li S."/>
            <person name="Standley D.M."/>
            <person name="Yamashita E."/>
            <person name="Nakagawa A."/>
            <person name="Okada M."/>
        </authorList>
    </citation>
    <scope>X-RAY CRYSTALLOGRAPHY (2.02 ANGSTROMS) IN COMPLEX WITH RRAGA; RRAGC; RRAGA; RRAGC; LAMTOR1; LAMTOR2; LAMTOR4 AND LAMTOR5</scope>
    <scope>FUNCTION</scope>
    <scope>IDENTIFICATION IN RAGULATOR COMPLEX</scope>
</reference>
<reference evidence="29 30" key="20">
    <citation type="journal article" date="2017" name="Science">
        <title>Crystal structure of the human lysosomal mTORC1 scaffold complex and its impact on signaling.</title>
        <authorList>
            <person name="de Araujo M.E.G."/>
            <person name="Naschberger A."/>
            <person name="Fuernrohr B.G."/>
            <person name="Stasyk T."/>
            <person name="Dunzendorfer-Matt T."/>
            <person name="Lechner S."/>
            <person name="Welti S."/>
            <person name="Kremser L."/>
            <person name="Shivalingaiah G."/>
            <person name="Offterdinger M."/>
            <person name="Lindner H.H."/>
            <person name="Huber L.A."/>
            <person name="Scheffzek K."/>
        </authorList>
    </citation>
    <scope>X-RAY CRYSTALLOGRAPHY (2.90 ANGSTROMS) OF 183-313 IN COMPLEX WITH RRAGA; RRAGC; LAMTOR1; LAMTOR2; LAMTOR4 AND LAMTOR5</scope>
    <scope>FUNCTION</scope>
    <scope>IDENTIFICATION IN RAGULATOR COMPLEX</scope>
</reference>
<reference evidence="33" key="21">
    <citation type="journal article" date="2019" name="Cell">
        <title>Cryo-EM structure of the human FLCN-FNIP2-Rag-Ragulator complex.</title>
        <authorList>
            <person name="Shen K."/>
            <person name="Rogala K.B."/>
            <person name="Chou H.T."/>
            <person name="Huang R.K."/>
            <person name="Yu Z."/>
            <person name="Sabatini D.M."/>
        </authorList>
    </citation>
    <scope>STRUCTURE BY ELECTRON MICROSCOPY (3.31 ANGSTROMS) IN COMPLEX WITH FLCN; FNIP2; RRAGA; RRAGC; LAMTOR1; LAMTOR2; LAMTOR4 AND LAMTOR5</scope>
    <scope>IDENTIFICATION IN THE LFC COMPLEX</scope>
</reference>
<reference evidence="32" key="22">
    <citation type="journal article" date="2019" name="Science">
        <title>Structural basis for the docking of mTORC1 on the lysosomal surface.</title>
        <authorList>
            <person name="Rogala K.B."/>
            <person name="Gu X."/>
            <person name="Kedir J.F."/>
            <person name="Abu-Remaileh M."/>
            <person name="Bianchi L.F."/>
            <person name="Bottino A.M.S."/>
            <person name="Dueholm R."/>
            <person name="Niehaus A."/>
            <person name="Overwijn D."/>
            <person name="Fils A.P."/>
            <person name="Zhou S.X."/>
            <person name="Leary D."/>
            <person name="Laqtom N.N."/>
            <person name="Brignole E.J."/>
            <person name="Sabatini D.M."/>
        </authorList>
    </citation>
    <scope>STRUCTURE BY ELECTRON MICROSCOPY (3.18 ANGSTROMS) IN COMPLEX WITH RRAGA; RRAGC; RPTOR; LAMTOR1; LAMTOR2; LAMTOR4 AND LAMTOR5</scope>
    <scope>IDENTIFICATION IN THE RAGULATOR COMPLEX</scope>
</reference>
<reference evidence="31" key="23">
    <citation type="journal article" date="2019" name="Science">
        <title>Structural mechanism of a Rag GTPase activation checkpoint by the lysosomal folliculin complex.</title>
        <authorList>
            <person name="Lawrence R.E."/>
            <person name="Fromm S.A."/>
            <person name="Fu Y."/>
            <person name="Yokom A.L."/>
            <person name="Kim D.J."/>
            <person name="Thelen A.M."/>
            <person name="Young L.N."/>
            <person name="Lim C.Y."/>
            <person name="Samelson A.J."/>
            <person name="Hurley J.H."/>
            <person name="Zoncu R."/>
        </authorList>
    </citation>
    <scope>STRUCTURE BY ELECTRON MICROSCOPY (3.60 ANGSTROMS) IN COMPLEX WITH FLCN; FNIP2; RRAGA; RRAGC; LAMTOR1; LAMTOR2; LAMTOR4 AND LAMTOR5</scope>
    <scope>IDENTIFICATION IN THE LFC COMPLEX</scope>
</reference>
<reference evidence="34 35" key="24">
    <citation type="journal article" date="2020" name="Nat. Struct. Mol. Biol.">
        <title>Structural mechanism for amino acid-dependent Rag GTPase nucleotide state switching by SLC38A9.</title>
        <authorList>
            <person name="Fromm S.A."/>
            <person name="Lawrence R.E."/>
            <person name="Hurley J.H."/>
        </authorList>
    </citation>
    <scope>STRUCTURE BY ELECTRON MICROSCOPY (3.20 ANGSTROMS) IN COMPLEX WITH SLC38A9; LAMTOR1; LAMTOR2; LAMTOR4; LAMTOR5 AND THE RAG GTPASES HETERODIMER (RRAGA AND RRAGC)</scope>
    <scope>SUBUNIT</scope>
</reference>
<reference evidence="36 37 38" key="25">
    <citation type="journal article" date="2022" name="Mol. Cell">
        <title>Cryo-EM structures of the human GATOR1-Rag-Ragulator complex reveal a spatial-constraint regulated GAP mechanism.</title>
        <authorList>
            <person name="Egri S.B."/>
            <person name="Ouch C."/>
            <person name="Chou H.T."/>
            <person name="Yu Z."/>
            <person name="Song K."/>
            <person name="Xu C."/>
            <person name="Shen K."/>
        </authorList>
    </citation>
    <scope>STRUCTURE BY ELECTRON MICROSCOPY (3.90 ANGSTROMS) IN COMPLEX WITH RRAGA; RRAGC; DEPDC5; NPRL2; NPRL3; LAMTOR1; LAMTOR2; LAMTOR4 AND LAMTOR5</scope>
    <scope>IDENTIFICATION IN THE RAGULATOR COMPLEX</scope>
</reference>
<reference evidence="42" key="26">
    <citation type="journal article" date="2022" name="Sci. Adv.">
        <title>Structural basis for FLCN RagC GAP activation in MiT-TFE substrate-selective mTORC1 regulation.</title>
        <authorList>
            <person name="Jansen R.M."/>
            <person name="Peruzzo R."/>
            <person name="Fromm S.A."/>
            <person name="Yokom A.L."/>
            <person name="Zoncu R."/>
            <person name="Hurley J.H."/>
        </authorList>
    </citation>
    <scope>STRUCTURE BY ELECTRON MICROSCOPY (3.53 ANGSTROMS) IN COMPLEX WITH RRAGA; RRAGC; LAMTOR1; LAMTOR2; LAMTOR4; LAMTOR5; FNIP2; FLCN AND SLC38A9</scope>
    <scope>IDENTIFICATION IN THE RAGULATOR COMPLEX</scope>
</reference>
<reference evidence="39 40 41" key="27">
    <citation type="journal article" date="2023" name="Nature">
        <title>Structure of the lysosomal mTORC1-TFEB-Rag-Ragulator megacomplex.</title>
        <authorList>
            <person name="Cui Z."/>
            <person name="Napolitano G."/>
            <person name="de Araujo M.E.G."/>
            <person name="Esposito A."/>
            <person name="Monfregola J."/>
            <person name="Huber L.A."/>
            <person name="Ballabio A."/>
            <person name="Hurley J.H."/>
        </authorList>
    </citation>
    <scope>STRUCTURE BY ELECTRON MICROSCOPY (2.90 ANGSTROMS) IN COMPLEX WITH RRAGA; RRAGC; LAMTOR1; LAMTOR2; LAMTOR4; LAMTOR5; RPTOR; MLST8; MTOR AND TFEB</scope>
    <scope>IDENTIFICATION IN THE RAGULATOR COMPLEX</scope>
</reference>
<evidence type="ECO:0000250" key="1"/>
<evidence type="ECO:0000250" key="2">
    <source>
        <dbReference type="UniProtKB" id="O88653"/>
    </source>
</evidence>
<evidence type="ECO:0000269" key="3">
    <source>
    </source>
</evidence>
<evidence type="ECO:0000269" key="4">
    <source>
    </source>
</evidence>
<evidence type="ECO:0000269" key="5">
    <source>
    </source>
</evidence>
<evidence type="ECO:0000269" key="6">
    <source>
    </source>
</evidence>
<evidence type="ECO:0000269" key="7">
    <source>
    </source>
</evidence>
<evidence type="ECO:0000269" key="8">
    <source>
    </source>
</evidence>
<evidence type="ECO:0000269" key="9">
    <source>
    </source>
</evidence>
<evidence type="ECO:0000269" key="10">
    <source>
    </source>
</evidence>
<evidence type="ECO:0000269" key="11">
    <source>
    </source>
</evidence>
<evidence type="ECO:0000269" key="12">
    <source>
    </source>
</evidence>
<evidence type="ECO:0000269" key="13">
    <source>
    </source>
</evidence>
<evidence type="ECO:0000269" key="14">
    <source>
    </source>
</evidence>
<evidence type="ECO:0000269" key="15">
    <source>
    </source>
</evidence>
<evidence type="ECO:0000269" key="16">
    <source>
    </source>
</evidence>
<evidence type="ECO:0000269" key="17">
    <source>
    </source>
</evidence>
<evidence type="ECO:0000269" key="18">
    <source>
    </source>
</evidence>
<evidence type="ECO:0000269" key="19">
    <source>
    </source>
</evidence>
<evidence type="ECO:0000303" key="20">
    <source ref="3"/>
</evidence>
<evidence type="ECO:0000305" key="21"/>
<evidence type="ECO:0000312" key="22">
    <source>
        <dbReference type="HGNC" id="HGNC:15606"/>
    </source>
</evidence>
<evidence type="ECO:0007744" key="23">
    <source>
        <dbReference type="PDB" id="5X6U"/>
    </source>
</evidence>
<evidence type="ECO:0007744" key="24">
    <source>
        <dbReference type="PDB" id="5X6V"/>
    </source>
</evidence>
<evidence type="ECO:0007744" key="25">
    <source>
        <dbReference type="PDB" id="5Y39"/>
    </source>
</evidence>
<evidence type="ECO:0007744" key="26">
    <source>
        <dbReference type="PDB" id="5Y3A"/>
    </source>
</evidence>
<evidence type="ECO:0007744" key="27">
    <source>
        <dbReference type="PDB" id="5YK3"/>
    </source>
</evidence>
<evidence type="ECO:0007744" key="28">
    <source>
        <dbReference type="PDB" id="6B9X"/>
    </source>
</evidence>
<evidence type="ECO:0007744" key="29">
    <source>
        <dbReference type="PDB" id="6EHP"/>
    </source>
</evidence>
<evidence type="ECO:0007744" key="30">
    <source>
        <dbReference type="PDB" id="6EHR"/>
    </source>
</evidence>
<evidence type="ECO:0007744" key="31">
    <source>
        <dbReference type="PDB" id="6NZD"/>
    </source>
</evidence>
<evidence type="ECO:0007744" key="32">
    <source>
        <dbReference type="PDB" id="6U62"/>
    </source>
</evidence>
<evidence type="ECO:0007744" key="33">
    <source>
        <dbReference type="PDB" id="6ULG"/>
    </source>
</evidence>
<evidence type="ECO:0007744" key="34">
    <source>
        <dbReference type="PDB" id="6WJ2"/>
    </source>
</evidence>
<evidence type="ECO:0007744" key="35">
    <source>
        <dbReference type="PDB" id="6WJ3"/>
    </source>
</evidence>
<evidence type="ECO:0007744" key="36">
    <source>
        <dbReference type="PDB" id="7T3A"/>
    </source>
</evidence>
<evidence type="ECO:0007744" key="37">
    <source>
        <dbReference type="PDB" id="7T3B"/>
    </source>
</evidence>
<evidence type="ECO:0007744" key="38">
    <source>
        <dbReference type="PDB" id="7T3C"/>
    </source>
</evidence>
<evidence type="ECO:0007744" key="39">
    <source>
        <dbReference type="PDB" id="7UX2"/>
    </source>
</evidence>
<evidence type="ECO:0007744" key="40">
    <source>
        <dbReference type="PDB" id="7UXC"/>
    </source>
</evidence>
<evidence type="ECO:0007744" key="41">
    <source>
        <dbReference type="PDB" id="7UXH"/>
    </source>
</evidence>
<evidence type="ECO:0007744" key="42">
    <source>
        <dbReference type="PDB" id="8DHB"/>
    </source>
</evidence>
<evidence type="ECO:0007829" key="43">
    <source>
        <dbReference type="PDB" id="6B9X"/>
    </source>
</evidence>
<evidence type="ECO:0007829" key="44">
    <source>
        <dbReference type="PDB" id="6EHR"/>
    </source>
</evidence>
<evidence type="ECO:0007829" key="45">
    <source>
        <dbReference type="PDB" id="6U62"/>
    </source>
</evidence>
<proteinExistence type="evidence at protein level"/>
<gene>
    <name evidence="22" type="primary">LAMTOR3</name>
    <name type="synonym">MAP2K1IP1</name>
    <name type="synonym">MAPKSP1</name>
    <name type="ORF">PRO2783</name>
</gene>
<dbReference type="EMBL" id="AF201947">
    <property type="protein sequence ID" value="AAF17239.1"/>
    <property type="molecule type" value="mRNA"/>
</dbReference>
<dbReference type="EMBL" id="AF130115">
    <property type="protein sequence ID" value="AAG35540.1"/>
    <property type="molecule type" value="mRNA"/>
</dbReference>
<dbReference type="EMBL" id="AL544981">
    <property type="status" value="NOT_ANNOTATED_CDS"/>
    <property type="molecule type" value="mRNA"/>
</dbReference>
<dbReference type="EMBL" id="AK311755">
    <property type="protein sequence ID" value="BAG34698.1"/>
    <property type="molecule type" value="mRNA"/>
</dbReference>
<dbReference type="EMBL" id="AP001962">
    <property type="status" value="NOT_ANNOTATED_CDS"/>
    <property type="molecule type" value="Genomic_DNA"/>
</dbReference>
<dbReference type="EMBL" id="CH471057">
    <property type="protein sequence ID" value="EAX06112.1"/>
    <property type="molecule type" value="Genomic_DNA"/>
</dbReference>
<dbReference type="EMBL" id="BC026245">
    <property type="protein sequence ID" value="AAH26245.1"/>
    <property type="molecule type" value="mRNA"/>
</dbReference>
<dbReference type="CCDS" id="CCDS3652.1">
    <molecule id="Q9UHA4-1"/>
</dbReference>
<dbReference type="CCDS" id="CCDS58920.1">
    <molecule id="Q9UHA4-2"/>
</dbReference>
<dbReference type="RefSeq" id="NP_001230665.1">
    <molecule id="Q9UHA4-2"/>
    <property type="nucleotide sequence ID" value="NM_001243736.1"/>
</dbReference>
<dbReference type="RefSeq" id="NP_068805.1">
    <molecule id="Q9UHA4-1"/>
    <property type="nucleotide sequence ID" value="NM_021970.4"/>
</dbReference>
<dbReference type="PDB" id="1SKO">
    <property type="method" value="X-ray"/>
    <property type="resolution" value="2.00 A"/>
    <property type="chains" value="A=2-124"/>
</dbReference>
<dbReference type="PDB" id="2ZL1">
    <property type="method" value="X-ray"/>
    <property type="resolution" value="2.00 A"/>
    <property type="chains" value="A=2-124"/>
</dbReference>
<dbReference type="PDB" id="3CPT">
    <property type="method" value="X-ray"/>
    <property type="resolution" value="1.90 A"/>
    <property type="chains" value="A=2-124"/>
</dbReference>
<dbReference type="PDB" id="5X6U">
    <property type="method" value="X-ray"/>
    <property type="resolution" value="2.40 A"/>
    <property type="chains" value="A=2-124"/>
</dbReference>
<dbReference type="PDB" id="5X6V">
    <property type="method" value="X-ray"/>
    <property type="resolution" value="2.02 A"/>
    <property type="chains" value="A=2-124"/>
</dbReference>
<dbReference type="PDB" id="5Y39">
    <property type="method" value="X-ray"/>
    <property type="resolution" value="2.65 A"/>
    <property type="chains" value="C/H=1-124"/>
</dbReference>
<dbReference type="PDB" id="5Y3A">
    <property type="method" value="X-ray"/>
    <property type="resolution" value="2.90 A"/>
    <property type="chains" value="C/H=1-124"/>
</dbReference>
<dbReference type="PDB" id="5YK3">
    <property type="method" value="X-ray"/>
    <property type="resolution" value="3.01 A"/>
    <property type="chains" value="D/H/m=1-124"/>
</dbReference>
<dbReference type="PDB" id="6B9X">
    <property type="method" value="X-ray"/>
    <property type="resolution" value="1.42 A"/>
    <property type="chains" value="C=1-124"/>
</dbReference>
<dbReference type="PDB" id="6EHP">
    <property type="method" value="X-ray"/>
    <property type="resolution" value="2.30 A"/>
    <property type="chains" value="A=1-124"/>
</dbReference>
<dbReference type="PDB" id="6EHR">
    <property type="method" value="X-ray"/>
    <property type="resolution" value="2.90 A"/>
    <property type="chains" value="A=1-124"/>
</dbReference>
<dbReference type="PDB" id="6NZD">
    <property type="method" value="EM"/>
    <property type="resolution" value="3.60 A"/>
    <property type="chains" value="C=1-124"/>
</dbReference>
<dbReference type="PDB" id="6U62">
    <property type="method" value="EM"/>
    <property type="resolution" value="3.18 A"/>
    <property type="chains" value="F=1-124"/>
</dbReference>
<dbReference type="PDB" id="6ULG">
    <property type="method" value="EM"/>
    <property type="resolution" value="3.31 A"/>
    <property type="chains" value="A=1-124"/>
</dbReference>
<dbReference type="PDB" id="6WJ2">
    <property type="method" value="EM"/>
    <property type="resolution" value="3.20 A"/>
    <property type="chains" value="C=1-124"/>
</dbReference>
<dbReference type="PDB" id="6WJ3">
    <property type="method" value="EM"/>
    <property type="resolution" value="3.90 A"/>
    <property type="chains" value="C=1-124"/>
</dbReference>
<dbReference type="PDB" id="7T3A">
    <property type="method" value="EM"/>
    <property type="resolution" value="4.00 A"/>
    <property type="chains" value="O=1-124"/>
</dbReference>
<dbReference type="PDB" id="7T3B">
    <property type="method" value="EM"/>
    <property type="resolution" value="3.90 A"/>
    <property type="chains" value="H=1-124"/>
</dbReference>
<dbReference type="PDB" id="7T3C">
    <property type="method" value="EM"/>
    <property type="resolution" value="4.00 A"/>
    <property type="chains" value="H/O=1-124"/>
</dbReference>
<dbReference type="PDB" id="7UX2">
    <property type="method" value="EM"/>
    <property type="resolution" value="2.90 A"/>
    <property type="chains" value="F/M=1-124"/>
</dbReference>
<dbReference type="PDB" id="7UXC">
    <property type="method" value="EM"/>
    <property type="resolution" value="3.20 A"/>
    <property type="chains" value="H/O=1-124"/>
</dbReference>
<dbReference type="PDB" id="7UXH">
    <property type="method" value="EM"/>
    <property type="resolution" value="3.20 A"/>
    <property type="chains" value="J/Q/Z/g=1-124"/>
</dbReference>
<dbReference type="PDB" id="8DHB">
    <property type="method" value="EM"/>
    <property type="resolution" value="3.53 A"/>
    <property type="chains" value="E=1-124"/>
</dbReference>
<dbReference type="PDBsum" id="1SKO"/>
<dbReference type="PDBsum" id="2ZL1"/>
<dbReference type="PDBsum" id="3CPT"/>
<dbReference type="PDBsum" id="5X6U"/>
<dbReference type="PDBsum" id="5X6V"/>
<dbReference type="PDBsum" id="5Y39"/>
<dbReference type="PDBsum" id="5Y3A"/>
<dbReference type="PDBsum" id="5YK3"/>
<dbReference type="PDBsum" id="6B9X"/>
<dbReference type="PDBsum" id="6EHP"/>
<dbReference type="PDBsum" id="6EHR"/>
<dbReference type="PDBsum" id="6NZD"/>
<dbReference type="PDBsum" id="6U62"/>
<dbReference type="PDBsum" id="6ULG"/>
<dbReference type="PDBsum" id="6WJ2"/>
<dbReference type="PDBsum" id="6WJ3"/>
<dbReference type="PDBsum" id="7T3A"/>
<dbReference type="PDBsum" id="7T3B"/>
<dbReference type="PDBsum" id="7T3C"/>
<dbReference type="PDBsum" id="7UX2"/>
<dbReference type="PDBsum" id="7UXC"/>
<dbReference type="PDBsum" id="7UXH"/>
<dbReference type="PDBsum" id="8DHB"/>
<dbReference type="EMDB" id="EMD-0554"/>
<dbReference type="EMDB" id="EMD-20660"/>
<dbReference type="EMDB" id="EMD-20814"/>
<dbReference type="EMDB" id="EMD-21686"/>
<dbReference type="EMDB" id="EMD-21687"/>
<dbReference type="EMDB" id="EMD-25652"/>
<dbReference type="EMDB" id="EMD-25653"/>
<dbReference type="EMDB" id="EMD-25654"/>
<dbReference type="EMDB" id="EMD-26846"/>
<dbReference type="EMDB" id="EMD-26857"/>
<dbReference type="EMDB" id="EMD-26861"/>
<dbReference type="EMDB" id="EMD-27435"/>
<dbReference type="SMR" id="Q9UHA4"/>
<dbReference type="BioGRID" id="114201">
    <property type="interactions" value="156"/>
</dbReference>
<dbReference type="ComplexPortal" id="CPX-4741">
    <property type="entry name" value="Ragulator complex"/>
</dbReference>
<dbReference type="CORUM" id="Q9UHA4"/>
<dbReference type="FunCoup" id="Q9UHA4">
    <property type="interactions" value="1546"/>
</dbReference>
<dbReference type="IntAct" id="Q9UHA4">
    <property type="interactions" value="50"/>
</dbReference>
<dbReference type="MINT" id="Q9UHA4"/>
<dbReference type="STRING" id="9606.ENSP00000424183"/>
<dbReference type="ChEMBL" id="CHEMBL5465366"/>
<dbReference type="iPTMnet" id="Q9UHA4"/>
<dbReference type="PhosphoSitePlus" id="Q9UHA4"/>
<dbReference type="BioMuta" id="LAMTOR3"/>
<dbReference type="DMDM" id="24418562"/>
<dbReference type="jPOST" id="Q9UHA4"/>
<dbReference type="MassIVE" id="Q9UHA4"/>
<dbReference type="PaxDb" id="9606-ENSP00000424183"/>
<dbReference type="PeptideAtlas" id="Q9UHA4"/>
<dbReference type="ProteomicsDB" id="84292">
    <molecule id="Q9UHA4-1"/>
</dbReference>
<dbReference type="Pumba" id="Q9UHA4"/>
<dbReference type="TopDownProteomics" id="Q9UHA4-1">
    <molecule id="Q9UHA4-1"/>
</dbReference>
<dbReference type="Antibodypedia" id="3792">
    <property type="antibodies" value="233 antibodies from 33 providers"/>
</dbReference>
<dbReference type="DNASU" id="8649"/>
<dbReference type="Ensembl" id="ENST00000226522.8">
    <molecule id="Q9UHA4-2"/>
    <property type="protein sequence ID" value="ENSP00000226522.8"/>
    <property type="gene ID" value="ENSG00000109270.13"/>
</dbReference>
<dbReference type="Ensembl" id="ENST00000499666.7">
    <molecule id="Q9UHA4-1"/>
    <property type="protein sequence ID" value="ENSP00000424183.1"/>
    <property type="gene ID" value="ENSG00000109270.13"/>
</dbReference>
<dbReference type="GeneID" id="8649"/>
<dbReference type="KEGG" id="hsa:8649"/>
<dbReference type="MANE-Select" id="ENST00000499666.7">
    <property type="protein sequence ID" value="ENSP00000424183.1"/>
    <property type="RefSeq nucleotide sequence ID" value="NM_021970.4"/>
    <property type="RefSeq protein sequence ID" value="NP_068805.1"/>
</dbReference>
<dbReference type="UCSC" id="uc003hvg.3">
    <molecule id="Q9UHA4-1"/>
    <property type="organism name" value="human"/>
</dbReference>
<dbReference type="AGR" id="HGNC:15606"/>
<dbReference type="CTD" id="8649"/>
<dbReference type="DisGeNET" id="8649"/>
<dbReference type="GeneCards" id="LAMTOR3"/>
<dbReference type="HGNC" id="HGNC:15606">
    <property type="gene designation" value="LAMTOR3"/>
</dbReference>
<dbReference type="HPA" id="ENSG00000109270">
    <property type="expression patterns" value="Low tissue specificity"/>
</dbReference>
<dbReference type="MIM" id="603296">
    <property type="type" value="gene"/>
</dbReference>
<dbReference type="neXtProt" id="NX_Q9UHA4"/>
<dbReference type="OpenTargets" id="ENSG00000109270"/>
<dbReference type="PharmGKB" id="PA164722189"/>
<dbReference type="VEuPathDB" id="HostDB:ENSG00000109270"/>
<dbReference type="eggNOG" id="ENOG502RYGZ">
    <property type="taxonomic scope" value="Eukaryota"/>
</dbReference>
<dbReference type="GeneTree" id="ENSGT00390000013159"/>
<dbReference type="HOGENOM" id="CLU_134641_0_0_1"/>
<dbReference type="InParanoid" id="Q9UHA4"/>
<dbReference type="OMA" id="YQVIQMN"/>
<dbReference type="OrthoDB" id="343907at2759"/>
<dbReference type="PAN-GO" id="Q9UHA4">
    <property type="GO annotations" value="3 GO annotations based on evolutionary models"/>
</dbReference>
<dbReference type="PhylomeDB" id="Q9UHA4"/>
<dbReference type="TreeFam" id="TF324889"/>
<dbReference type="PathwayCommons" id="Q9UHA4"/>
<dbReference type="Reactome" id="R-HSA-1632852">
    <property type="pathway name" value="Macroautophagy"/>
</dbReference>
<dbReference type="Reactome" id="R-HSA-165159">
    <property type="pathway name" value="MTOR signalling"/>
</dbReference>
<dbReference type="Reactome" id="R-HSA-166208">
    <property type="pathway name" value="mTORC1-mediated signalling"/>
</dbReference>
<dbReference type="Reactome" id="R-HSA-380972">
    <property type="pathway name" value="Energy dependent regulation of mTOR by LKB1-AMPK"/>
</dbReference>
<dbReference type="Reactome" id="R-HSA-5628897">
    <property type="pathway name" value="TP53 Regulates Metabolic Genes"/>
</dbReference>
<dbReference type="Reactome" id="R-HSA-5674135">
    <property type="pathway name" value="MAP2K and MAPK activation"/>
</dbReference>
<dbReference type="Reactome" id="R-HSA-6798695">
    <property type="pathway name" value="Neutrophil degranulation"/>
</dbReference>
<dbReference type="Reactome" id="R-HSA-8943724">
    <property type="pathway name" value="Regulation of PTEN gene transcription"/>
</dbReference>
<dbReference type="Reactome" id="R-HSA-9639288">
    <property type="pathway name" value="Amino acids regulate mTORC1"/>
</dbReference>
<dbReference type="SignaLink" id="Q9UHA4"/>
<dbReference type="SIGNOR" id="Q9UHA4"/>
<dbReference type="BioGRID-ORCS" id="8649">
    <property type="hits" value="449 hits in 1137 CRISPR screens"/>
</dbReference>
<dbReference type="ChiTaRS" id="LAMTOR3">
    <property type="organism name" value="human"/>
</dbReference>
<dbReference type="EvolutionaryTrace" id="Q9UHA4"/>
<dbReference type="GeneWiki" id="MAP2K1IP1"/>
<dbReference type="GenomeRNAi" id="8649"/>
<dbReference type="Pharos" id="Q9UHA4">
    <property type="development level" value="Tbio"/>
</dbReference>
<dbReference type="PRO" id="PR:Q9UHA4"/>
<dbReference type="Proteomes" id="UP000005640">
    <property type="component" value="Chromosome 4"/>
</dbReference>
<dbReference type="RNAct" id="Q9UHA4">
    <property type="molecule type" value="protein"/>
</dbReference>
<dbReference type="Bgee" id="ENSG00000109270">
    <property type="expression patterns" value="Expressed in mucosa of sigmoid colon and 206 other cell types or tissues"/>
</dbReference>
<dbReference type="GO" id="GO:0010008">
    <property type="term" value="C:endosome membrane"/>
    <property type="evidence" value="ECO:0000304"/>
    <property type="project" value="Reactome"/>
</dbReference>
<dbReference type="GO" id="GO:0070062">
    <property type="term" value="C:extracellular exosome"/>
    <property type="evidence" value="ECO:0007005"/>
    <property type="project" value="UniProtKB"/>
</dbReference>
<dbReference type="GO" id="GO:1990877">
    <property type="term" value="C:FNIP-folliculin RagC/D GAP"/>
    <property type="evidence" value="ECO:0000314"/>
    <property type="project" value="UniProtKB"/>
</dbReference>
<dbReference type="GO" id="GO:0005925">
    <property type="term" value="C:focal adhesion"/>
    <property type="evidence" value="ECO:0007005"/>
    <property type="project" value="UniProtKB"/>
</dbReference>
<dbReference type="GO" id="GO:0031902">
    <property type="term" value="C:late endosome membrane"/>
    <property type="evidence" value="ECO:0000303"/>
    <property type="project" value="ComplexPortal"/>
</dbReference>
<dbReference type="GO" id="GO:0005765">
    <property type="term" value="C:lysosomal membrane"/>
    <property type="evidence" value="ECO:0000314"/>
    <property type="project" value="UniProtKB"/>
</dbReference>
<dbReference type="GO" id="GO:0005886">
    <property type="term" value="C:plasma membrane"/>
    <property type="evidence" value="ECO:0000304"/>
    <property type="project" value="Reactome"/>
</dbReference>
<dbReference type="GO" id="GO:0071986">
    <property type="term" value="C:Ragulator complex"/>
    <property type="evidence" value="ECO:0000314"/>
    <property type="project" value="UniProtKB"/>
</dbReference>
<dbReference type="GO" id="GO:0035579">
    <property type="term" value="C:specific granule membrane"/>
    <property type="evidence" value="ECO:0000304"/>
    <property type="project" value="Reactome"/>
</dbReference>
<dbReference type="GO" id="GO:0070821">
    <property type="term" value="C:tertiary granule membrane"/>
    <property type="evidence" value="ECO:0000304"/>
    <property type="project" value="Reactome"/>
</dbReference>
<dbReference type="GO" id="GO:0019209">
    <property type="term" value="F:kinase activator activity"/>
    <property type="evidence" value="ECO:0007669"/>
    <property type="project" value="Ensembl"/>
</dbReference>
<dbReference type="GO" id="GO:0071230">
    <property type="term" value="P:cellular response to amino acid stimulus"/>
    <property type="evidence" value="ECO:0000314"/>
    <property type="project" value="ComplexPortal"/>
</dbReference>
<dbReference type="GO" id="GO:0043410">
    <property type="term" value="P:positive regulation of MAPK cascade"/>
    <property type="evidence" value="ECO:0007669"/>
    <property type="project" value="Ensembl"/>
</dbReference>
<dbReference type="GO" id="GO:0032008">
    <property type="term" value="P:positive regulation of TOR signaling"/>
    <property type="evidence" value="ECO:0000315"/>
    <property type="project" value="UniProtKB"/>
</dbReference>
<dbReference type="GO" id="GO:1904263">
    <property type="term" value="P:positive regulation of TORC1 signaling"/>
    <property type="evidence" value="ECO:0000314"/>
    <property type="project" value="UniProtKB"/>
</dbReference>
<dbReference type="GO" id="GO:0008104">
    <property type="term" value="P:protein localization"/>
    <property type="evidence" value="ECO:0000315"/>
    <property type="project" value="UniProtKB"/>
</dbReference>
<dbReference type="GO" id="GO:1902414">
    <property type="term" value="P:protein localization to cell junction"/>
    <property type="evidence" value="ECO:0007669"/>
    <property type="project" value="Ensembl"/>
</dbReference>
<dbReference type="GO" id="GO:0038202">
    <property type="term" value="P:TORC1 signaling"/>
    <property type="evidence" value="ECO:0000303"/>
    <property type="project" value="ComplexPortal"/>
</dbReference>
<dbReference type="FunFam" id="3.30.450.30:FF:000003">
    <property type="entry name" value="ragulator complex protein LAMTOR3 homolog"/>
    <property type="match status" value="1"/>
</dbReference>
<dbReference type="Gene3D" id="3.30.450.30">
    <property type="entry name" value="Dynein light chain 2a, cytoplasmic"/>
    <property type="match status" value="1"/>
</dbReference>
<dbReference type="InterPro" id="IPR015019">
    <property type="entry name" value="LAMTOR3"/>
</dbReference>
<dbReference type="PANTHER" id="PTHR13378:SF1">
    <property type="entry name" value="RAGULATOR COMPLEX PROTEIN LAMTOR3"/>
    <property type="match status" value="1"/>
</dbReference>
<dbReference type="PANTHER" id="PTHR13378">
    <property type="entry name" value="REGULATOR COMPLEX PROTEIN LAMTOR3"/>
    <property type="match status" value="1"/>
</dbReference>
<dbReference type="Pfam" id="PF08923">
    <property type="entry name" value="MAPKK1_Int"/>
    <property type="match status" value="1"/>
</dbReference>
<dbReference type="SMART" id="SM01278">
    <property type="entry name" value="MAPKK1_Int"/>
    <property type="match status" value="1"/>
</dbReference>
<dbReference type="SUPFAM" id="SSF103196">
    <property type="entry name" value="Roadblock/LC7 domain"/>
    <property type="match status" value="1"/>
</dbReference>